<evidence type="ECO:0000250" key="1">
    <source>
        <dbReference type="UniProtKB" id="P9WI79"/>
    </source>
</evidence>
<evidence type="ECO:0000255" key="2"/>
<evidence type="ECO:0000255" key="3">
    <source>
        <dbReference type="PROSITE-ProRule" id="PRU00159"/>
    </source>
</evidence>
<evidence type="ECO:0000255" key="4">
    <source>
        <dbReference type="PROSITE-ProRule" id="PRU10027"/>
    </source>
</evidence>
<evidence type="ECO:0000256" key="5">
    <source>
        <dbReference type="SAM" id="MobiDB-lite"/>
    </source>
</evidence>
<evidence type="ECO:0000269" key="6">
    <source>
    </source>
</evidence>
<evidence type="ECO:0000305" key="7"/>
<organism>
    <name type="scientific">Mycobacterium tuberculosis (strain CDC 1551 / Oshkosh)</name>
    <dbReference type="NCBI Taxonomy" id="83331"/>
    <lineage>
        <taxon>Bacteria</taxon>
        <taxon>Bacillati</taxon>
        <taxon>Actinomycetota</taxon>
        <taxon>Actinomycetes</taxon>
        <taxon>Mycobacteriales</taxon>
        <taxon>Mycobacteriaceae</taxon>
        <taxon>Mycobacterium</taxon>
        <taxon>Mycobacterium tuberculosis complex</taxon>
    </lineage>
</organism>
<sequence>MSDAVPQVGSQFGPYQLLRLLGRGGMGEVYEAEDTRKHRVVALKLISPQYSDNAVFRARMQREADTAGRLTEPHIVPIHDYGEINGQFFVEMRMIDGTSLRALLKQYGPLTPARAVAIVRQIAAALDAAHANGVTHRDVKPENILVTASDFAYLVDFGIARAASDPGLTQTGTAVGTYNYMAPERFTGDEVTYRADIYALACVLGECLTGAPPYRADSVERLIAAHLMDPAPQPSQLRPGRVPPALDQVIAKGMAKNPAERFMSAGDLAIAAHDALTTSEQHQATTILRRGDNATLLATPADTGLSQSESGIAGAGTGPPTPGAARWSPGDSATVAGPLAADSRGGNWPSQTGHSPAVPNALQASLGHAVPPAGNKRKVWAVVGAAAIVLVAIVAAAGYLVLRPSWSPTQASGQTVLPFTGIDFRLSPSGVAVDSAGNVYVTSEGMYGRVVKLATGSTGTTVLPFNGLYQPQGLAVDGAGTVYVTDFNNRVVTLAAGSNNQTVLPFDGLNYPEGLAVDTQGAVYVADRGNNRVVKLAAGSKTQTVLPFTGLNDPDGVAVDNSGNVYVTDTDNNRVVKLEAESNNQVVLPFTDITAPWGIAVDEAGTVYVTEHNTNQVVKLLAGSTTSTVLPFTGLNTPLAVAVDSDRTVYVADRGNDRVVKLTS</sequence>
<keyword id="KW-0067">ATP-binding</keyword>
<keyword id="KW-1003">Cell membrane</keyword>
<keyword id="KW-0418">Kinase</keyword>
<keyword id="KW-0472">Membrane</keyword>
<keyword id="KW-0547">Nucleotide-binding</keyword>
<keyword id="KW-0597">Phosphoprotein</keyword>
<keyword id="KW-1185">Reference proteome</keyword>
<keyword id="KW-0677">Repeat</keyword>
<keyword id="KW-0723">Serine/threonine-protein kinase</keyword>
<keyword id="KW-0808">Transferase</keyword>
<keyword id="KW-0812">Transmembrane</keyword>
<keyword id="KW-1133">Transmembrane helix</keyword>
<keyword id="KW-0843">Virulence</keyword>
<feature type="chain" id="PRO_0000428054" description="Serine/threonine-protein kinase PknD">
    <location>
        <begin position="1"/>
        <end position="664"/>
    </location>
</feature>
<feature type="topological domain" description="Cytoplasmic" evidence="2">
    <location>
        <begin position="1"/>
        <end position="381"/>
    </location>
</feature>
<feature type="transmembrane region" description="Helical" evidence="2">
    <location>
        <begin position="382"/>
        <end position="402"/>
    </location>
</feature>
<feature type="topological domain" description="Extracellular" evidence="2">
    <location>
        <begin position="403"/>
        <end position="664"/>
    </location>
</feature>
<feature type="domain" description="Protein kinase" evidence="3">
    <location>
        <begin position="15"/>
        <end position="276"/>
    </location>
</feature>
<feature type="repeat" description="NHL 1">
    <location>
        <begin position="414"/>
        <end position="456"/>
    </location>
</feature>
<feature type="repeat" description="NHL 2">
    <location>
        <begin position="457"/>
        <end position="497"/>
    </location>
</feature>
<feature type="repeat" description="NHL 3">
    <location>
        <begin position="498"/>
        <end position="539"/>
    </location>
</feature>
<feature type="repeat" description="NHL 4">
    <location>
        <begin position="540"/>
        <end position="581"/>
    </location>
</feature>
<feature type="repeat" description="NHL 5">
    <location>
        <begin position="582"/>
        <end position="623"/>
    </location>
</feature>
<feature type="repeat" description="NHL 6">
    <location>
        <begin position="624"/>
        <end position="664"/>
    </location>
</feature>
<feature type="region of interest" description="Disordered" evidence="5">
    <location>
        <begin position="303"/>
        <end position="333"/>
    </location>
</feature>
<feature type="active site" description="Proton acceptor" evidence="3 4">
    <location>
        <position position="138"/>
    </location>
</feature>
<feature type="binding site" evidence="3">
    <location>
        <begin position="21"/>
        <end position="29"/>
    </location>
    <ligand>
        <name>ATP</name>
        <dbReference type="ChEBI" id="CHEBI:30616"/>
    </ligand>
</feature>
<feature type="binding site" evidence="3">
    <location>
        <position position="44"/>
    </location>
    <ligand>
        <name>ATP</name>
        <dbReference type="ChEBI" id="CHEBI:30616"/>
    </ligand>
</feature>
<feature type="modified residue" description="Phosphothreonine; by autocatalysis" evidence="1">
    <location>
        <position position="135"/>
    </location>
</feature>
<feature type="modified residue" description="Phosphothreonine; by autocatalysis" evidence="1">
    <location>
        <position position="169"/>
    </location>
</feature>
<feature type="modified residue" description="Phosphothreonine; by autocatalysis" evidence="1">
    <location>
        <position position="171"/>
    </location>
</feature>
<feature type="modified residue" description="Phosphothreonine; by autocatalysis" evidence="1">
    <location>
        <position position="173"/>
    </location>
</feature>
<feature type="modified residue" description="Phosphothreonine; by autocatalysis" evidence="1">
    <location>
        <position position="209"/>
    </location>
</feature>
<name>PKND_MYCTO</name>
<dbReference type="EC" id="2.7.11.1" evidence="1"/>
<dbReference type="EMBL" id="AE000516">
    <property type="protein sequence ID" value="AAK45205.1"/>
    <property type="molecule type" value="Genomic_DNA"/>
</dbReference>
<dbReference type="PIR" id="C70584">
    <property type="entry name" value="C70584"/>
</dbReference>
<dbReference type="RefSeq" id="WP_003404782.1">
    <property type="nucleotide sequence ID" value="NZ_KK341227.1"/>
</dbReference>
<dbReference type="SMR" id="P9WI78"/>
<dbReference type="GeneID" id="45424897"/>
<dbReference type="KEGG" id="mtc:MT0958"/>
<dbReference type="PATRIC" id="fig|83331.31.peg.1028"/>
<dbReference type="HOGENOM" id="CLU_000288_63_44_11"/>
<dbReference type="Proteomes" id="UP000001020">
    <property type="component" value="Chromosome"/>
</dbReference>
<dbReference type="GO" id="GO:0005886">
    <property type="term" value="C:plasma membrane"/>
    <property type="evidence" value="ECO:0007669"/>
    <property type="project" value="UniProtKB-SubCell"/>
</dbReference>
<dbReference type="GO" id="GO:0005524">
    <property type="term" value="F:ATP binding"/>
    <property type="evidence" value="ECO:0007669"/>
    <property type="project" value="UniProtKB-KW"/>
</dbReference>
<dbReference type="GO" id="GO:0106310">
    <property type="term" value="F:protein serine kinase activity"/>
    <property type="evidence" value="ECO:0007669"/>
    <property type="project" value="RHEA"/>
</dbReference>
<dbReference type="GO" id="GO:0004674">
    <property type="term" value="F:protein serine/threonine kinase activity"/>
    <property type="evidence" value="ECO:0007669"/>
    <property type="project" value="UniProtKB-KW"/>
</dbReference>
<dbReference type="GO" id="GO:0080090">
    <property type="term" value="P:regulation of primary metabolic process"/>
    <property type="evidence" value="ECO:0007669"/>
    <property type="project" value="UniProtKB-ARBA"/>
</dbReference>
<dbReference type="CDD" id="cd14952">
    <property type="entry name" value="NHL_PKND_like"/>
    <property type="match status" value="1"/>
</dbReference>
<dbReference type="CDD" id="cd14014">
    <property type="entry name" value="STKc_PknB_like"/>
    <property type="match status" value="1"/>
</dbReference>
<dbReference type="FunFam" id="1.10.510.10:FF:000021">
    <property type="entry name" value="Serine/threonine protein kinase"/>
    <property type="match status" value="1"/>
</dbReference>
<dbReference type="FunFam" id="3.30.200.20:FF:000348">
    <property type="entry name" value="Serine/threonine protein kinase"/>
    <property type="match status" value="1"/>
</dbReference>
<dbReference type="Gene3D" id="3.30.200.20">
    <property type="entry name" value="Phosphorylase Kinase, domain 1"/>
    <property type="match status" value="1"/>
</dbReference>
<dbReference type="Gene3D" id="2.120.10.30">
    <property type="entry name" value="TolB, C-terminal domain"/>
    <property type="match status" value="1"/>
</dbReference>
<dbReference type="Gene3D" id="1.10.510.10">
    <property type="entry name" value="Transferase(Phosphotransferase) domain 1"/>
    <property type="match status" value="1"/>
</dbReference>
<dbReference type="InterPro" id="IPR011042">
    <property type="entry name" value="6-blade_b-propeller_TolB-like"/>
</dbReference>
<dbReference type="InterPro" id="IPR011009">
    <property type="entry name" value="Kinase-like_dom_sf"/>
</dbReference>
<dbReference type="InterPro" id="IPR035016">
    <property type="entry name" value="NHL_PKND"/>
</dbReference>
<dbReference type="InterPro" id="IPR001258">
    <property type="entry name" value="NHL_repeat"/>
</dbReference>
<dbReference type="InterPro" id="IPR000719">
    <property type="entry name" value="Prot_kinase_dom"/>
</dbReference>
<dbReference type="InterPro" id="IPR017441">
    <property type="entry name" value="Protein_kinase_ATP_BS"/>
</dbReference>
<dbReference type="InterPro" id="IPR008271">
    <property type="entry name" value="Ser/Thr_kinase_AS"/>
</dbReference>
<dbReference type="PANTHER" id="PTHR43289">
    <property type="entry name" value="MITOGEN-ACTIVATED PROTEIN KINASE KINASE KINASE 20-RELATED"/>
    <property type="match status" value="1"/>
</dbReference>
<dbReference type="PANTHER" id="PTHR43289:SF6">
    <property type="entry name" value="SERINE_THREONINE-PROTEIN KINASE NEKL-3"/>
    <property type="match status" value="1"/>
</dbReference>
<dbReference type="Pfam" id="PF01436">
    <property type="entry name" value="NHL"/>
    <property type="match status" value="5"/>
</dbReference>
<dbReference type="Pfam" id="PF00069">
    <property type="entry name" value="Pkinase"/>
    <property type="match status" value="1"/>
</dbReference>
<dbReference type="SMART" id="SM00220">
    <property type="entry name" value="S_TKc"/>
    <property type="match status" value="1"/>
</dbReference>
<dbReference type="SUPFAM" id="SSF101898">
    <property type="entry name" value="NHL repeat"/>
    <property type="match status" value="1"/>
</dbReference>
<dbReference type="SUPFAM" id="SSF56112">
    <property type="entry name" value="Protein kinase-like (PK-like)"/>
    <property type="match status" value="1"/>
</dbReference>
<dbReference type="PROSITE" id="PS51125">
    <property type="entry name" value="NHL"/>
    <property type="match status" value="6"/>
</dbReference>
<dbReference type="PROSITE" id="PS00107">
    <property type="entry name" value="PROTEIN_KINASE_ATP"/>
    <property type="match status" value="1"/>
</dbReference>
<dbReference type="PROSITE" id="PS50011">
    <property type="entry name" value="PROTEIN_KINASE_DOM"/>
    <property type="match status" value="1"/>
</dbReference>
<dbReference type="PROSITE" id="PS00108">
    <property type="entry name" value="PROTEIN_KINASE_ST"/>
    <property type="match status" value="1"/>
</dbReference>
<accession>P9WI78</accession>
<accession>L0T6U6</accession>
<accession>O05871</accession>
<accession>P95308</accession>
<gene>
    <name type="primary">pknD</name>
    <name type="ordered locus">MT0958</name>
</gene>
<reference key="1">
    <citation type="journal article" date="2002" name="J. Bacteriol.">
        <title>Whole-genome comparison of Mycobacterium tuberculosis clinical and laboratory strains.</title>
        <authorList>
            <person name="Fleischmann R.D."/>
            <person name="Alland D."/>
            <person name="Eisen J.A."/>
            <person name="Carpenter L."/>
            <person name="White O."/>
            <person name="Peterson J.D."/>
            <person name="DeBoy R.T."/>
            <person name="Dodson R.J."/>
            <person name="Gwinn M.L."/>
            <person name="Haft D.H."/>
            <person name="Hickey E.K."/>
            <person name="Kolonay J.F."/>
            <person name="Nelson W.C."/>
            <person name="Umayam L.A."/>
            <person name="Ermolaeva M.D."/>
            <person name="Salzberg S.L."/>
            <person name="Delcher A."/>
            <person name="Utterback T.R."/>
            <person name="Weidman J.F."/>
            <person name="Khouri H.M."/>
            <person name="Gill J."/>
            <person name="Mikula A."/>
            <person name="Bishai W."/>
            <person name="Jacobs W.R. Jr."/>
            <person name="Venter J.C."/>
            <person name="Fraser C.M."/>
        </authorList>
    </citation>
    <scope>NUCLEOTIDE SEQUENCE [LARGE SCALE GENOMIC DNA]</scope>
    <source>
        <strain>CDC 1551 / Oshkosh</strain>
    </source>
</reference>
<reference key="2">
    <citation type="journal article" date="2012" name="BMC Microbiol.">
        <title>Role of Mycobacterium tuberculosis pknD in the pathogenesis of central nervous system tuberculosis.</title>
        <authorList>
            <person name="Be N.A."/>
            <person name="Bishai W.R."/>
            <person name="Jain S.K."/>
        </authorList>
    </citation>
    <scope>FUNCTION IN VIRULENCE</scope>
    <scope>INTERACTION WITH HOST LAMININ</scope>
    <scope>DISRUPTION PHENOTYPE</scope>
    <source>
        <strain>CDC 1551 / Oshkosh</strain>
    </source>
</reference>
<comment type="function">
    <text evidence="1">Part of a signaling pathway that enables adaptation to osmotic stress through cell wall remodeling and virulence factor production.</text>
</comment>
<comment type="function">
    <text evidence="6">Key microbial factor required for central nervous system tuberculosis. Required for invasion of host brain endothelia, but not macrophages, lung epithelia or other endothelia.</text>
</comment>
<comment type="catalytic activity">
    <reaction evidence="1">
        <text>L-seryl-[protein] + ATP = O-phospho-L-seryl-[protein] + ADP + H(+)</text>
        <dbReference type="Rhea" id="RHEA:17989"/>
        <dbReference type="Rhea" id="RHEA-COMP:9863"/>
        <dbReference type="Rhea" id="RHEA-COMP:11604"/>
        <dbReference type="ChEBI" id="CHEBI:15378"/>
        <dbReference type="ChEBI" id="CHEBI:29999"/>
        <dbReference type="ChEBI" id="CHEBI:30616"/>
        <dbReference type="ChEBI" id="CHEBI:83421"/>
        <dbReference type="ChEBI" id="CHEBI:456216"/>
        <dbReference type="EC" id="2.7.11.1"/>
    </reaction>
</comment>
<comment type="catalytic activity">
    <reaction evidence="1">
        <text>L-threonyl-[protein] + ATP = O-phospho-L-threonyl-[protein] + ADP + H(+)</text>
        <dbReference type="Rhea" id="RHEA:46608"/>
        <dbReference type="Rhea" id="RHEA-COMP:11060"/>
        <dbReference type="Rhea" id="RHEA-COMP:11605"/>
        <dbReference type="ChEBI" id="CHEBI:15378"/>
        <dbReference type="ChEBI" id="CHEBI:30013"/>
        <dbReference type="ChEBI" id="CHEBI:30616"/>
        <dbReference type="ChEBI" id="CHEBI:61977"/>
        <dbReference type="ChEBI" id="CHEBI:456216"/>
        <dbReference type="EC" id="2.7.11.1"/>
    </reaction>
</comment>
<comment type="activity regulation">
    <text evidence="1">Dimerization activates the kinase domain of unphosphorylated PknD via an allosteric mechanism, triggering autophosphorylation and phosphorylation of target proteins. Phosphorylated PknD is fully active even in the absence of dimerization.</text>
</comment>
<comment type="subunit">
    <text evidence="1 6">Homodimer (By similarity). The extracellular domain interacts with host laminin (PubMed:22243650).</text>
</comment>
<comment type="subcellular location">
    <subcellularLocation>
        <location evidence="7">Cell membrane</location>
        <topology evidence="7">Single-pass membrane protein</topology>
    </subcellularLocation>
</comment>
<comment type="PTM">
    <text evidence="1">Autophosphorylated. Dephosphorylated by PstP.</text>
</comment>
<comment type="disruption phenotype">
    <text evidence="6">Mutants display defective invasion and reduced survival in brain endothelia.</text>
</comment>
<comment type="similarity">
    <text evidence="3">Belongs to the protein kinase superfamily. Ser/Thr protein kinase family.</text>
</comment>
<protein>
    <recommendedName>
        <fullName>Serine/threonine-protein kinase PknD</fullName>
        <ecNumber evidence="1">2.7.11.1</ecNumber>
    </recommendedName>
</protein>
<proteinExistence type="evidence at protein level"/>